<proteinExistence type="inferred from homology"/>
<evidence type="ECO:0000255" key="1">
    <source>
        <dbReference type="HAMAP-Rule" id="MF_01187"/>
    </source>
</evidence>
<evidence type="ECO:0000305" key="2"/>
<accession>A7NDA9</accession>
<gene>
    <name type="ordered locus">FTA_1487</name>
</gene>
<protein>
    <recommendedName>
        <fullName evidence="1">UPF0434 protein FTA_1487</fullName>
    </recommendedName>
</protein>
<comment type="similarity">
    <text evidence="1">Belongs to the UPF0434 family.</text>
</comment>
<comment type="sequence caution" evidence="2">
    <conflict type="erroneous initiation">
        <sequence resource="EMBL-CDS" id="ABU61962"/>
    </conflict>
</comment>
<dbReference type="EMBL" id="CP000803">
    <property type="protein sequence ID" value="ABU61962.2"/>
    <property type="status" value="ALT_INIT"/>
    <property type="molecule type" value="Genomic_DNA"/>
</dbReference>
<dbReference type="RefSeq" id="WP_003016659.1">
    <property type="nucleotide sequence ID" value="NC_009749.1"/>
</dbReference>
<dbReference type="SMR" id="A7NDA9"/>
<dbReference type="KEGG" id="fta:FTA_1487"/>
<dbReference type="HOGENOM" id="CLU_155659_3_1_6"/>
<dbReference type="GO" id="GO:0005829">
    <property type="term" value="C:cytosol"/>
    <property type="evidence" value="ECO:0007669"/>
    <property type="project" value="TreeGrafter"/>
</dbReference>
<dbReference type="FunFam" id="2.20.25.10:FF:000002">
    <property type="entry name" value="UPF0434 protein YcaR"/>
    <property type="match status" value="1"/>
</dbReference>
<dbReference type="Gene3D" id="2.20.25.10">
    <property type="match status" value="1"/>
</dbReference>
<dbReference type="HAMAP" id="MF_01187">
    <property type="entry name" value="UPF0434"/>
    <property type="match status" value="1"/>
</dbReference>
<dbReference type="InterPro" id="IPR005651">
    <property type="entry name" value="Trm112-like"/>
</dbReference>
<dbReference type="PANTHER" id="PTHR33505:SF4">
    <property type="entry name" value="PROTEIN PREY, MITOCHONDRIAL"/>
    <property type="match status" value="1"/>
</dbReference>
<dbReference type="PANTHER" id="PTHR33505">
    <property type="entry name" value="ZGC:162634"/>
    <property type="match status" value="1"/>
</dbReference>
<dbReference type="Pfam" id="PF03966">
    <property type="entry name" value="Trm112p"/>
    <property type="match status" value="1"/>
</dbReference>
<dbReference type="SUPFAM" id="SSF158997">
    <property type="entry name" value="Trm112p-like"/>
    <property type="match status" value="1"/>
</dbReference>
<reference key="1">
    <citation type="journal article" date="2009" name="PLoS ONE">
        <title>Complete genome sequence of Francisella tularensis subspecies holarctica FTNF002-00.</title>
        <authorList>
            <person name="Barabote R.D."/>
            <person name="Xie G."/>
            <person name="Brettin T.S."/>
            <person name="Hinrichs S.H."/>
            <person name="Fey P.D."/>
            <person name="Jay J.J."/>
            <person name="Engle J.L."/>
            <person name="Godbole S.D."/>
            <person name="Noronha J.M."/>
            <person name="Scheuermann R.H."/>
            <person name="Zhou L.W."/>
            <person name="Lion C."/>
            <person name="Dempsey M.P."/>
        </authorList>
    </citation>
    <scope>NUCLEOTIDE SEQUENCE [LARGE SCALE GENOMIC DNA]</scope>
    <source>
        <strain>FTNF002-00 / FTA</strain>
    </source>
</reference>
<name>Y1487_FRATF</name>
<organism>
    <name type="scientific">Francisella tularensis subsp. holarctica (strain FTNF002-00 / FTA)</name>
    <dbReference type="NCBI Taxonomy" id="458234"/>
    <lineage>
        <taxon>Bacteria</taxon>
        <taxon>Pseudomonadati</taxon>
        <taxon>Pseudomonadota</taxon>
        <taxon>Gammaproteobacteria</taxon>
        <taxon>Thiotrichales</taxon>
        <taxon>Francisellaceae</taxon>
        <taxon>Francisella</taxon>
    </lineage>
</organism>
<sequence>MDHSVLNVLVCPICKANLYYDKENQVLVCKADKLAYPIRENIPVMLVEEAKKMTLEEVKKYG</sequence>
<feature type="chain" id="PRO_1000065842" description="UPF0434 protein FTA_1487">
    <location>
        <begin position="1"/>
        <end position="62"/>
    </location>
</feature>